<gene>
    <name type="primary">folK</name>
    <name type="ordered locus">ML0226</name>
    <name type="ORF">MLCB2548.05c</name>
</gene>
<evidence type="ECO:0000250" key="1">
    <source>
        <dbReference type="UniProtKB" id="P26281"/>
    </source>
</evidence>
<evidence type="ECO:0000305" key="2"/>
<accession>O69528</accession>
<sequence length="191" mass="20761">MTRVVLSIGSNLGDRLAWLQSAVDGLGDAVVAVSPVYDTVPWGAVEQRSFLNAVVIADGPAYDTKAWLCRAQELERNAGRVRGQRWGARTLDVDLISCYQTSGATTGAVEVITCESNLTLPHPRAHLRAFVLVPWLAVDSDAELTVAGRAQRVDRLLAEMEPTEREGVRLTNLTLKLKRSSPARPVSPKSD</sequence>
<reference key="1">
    <citation type="journal article" date="2001" name="Nature">
        <title>Massive gene decay in the leprosy bacillus.</title>
        <authorList>
            <person name="Cole S.T."/>
            <person name="Eiglmeier K."/>
            <person name="Parkhill J."/>
            <person name="James K.D."/>
            <person name="Thomson N.R."/>
            <person name="Wheeler P.R."/>
            <person name="Honore N."/>
            <person name="Garnier T."/>
            <person name="Churcher C.M."/>
            <person name="Harris D.E."/>
            <person name="Mungall K.L."/>
            <person name="Basham D."/>
            <person name="Brown D."/>
            <person name="Chillingworth T."/>
            <person name="Connor R."/>
            <person name="Davies R.M."/>
            <person name="Devlin K."/>
            <person name="Duthoy S."/>
            <person name="Feltwell T."/>
            <person name="Fraser A."/>
            <person name="Hamlin N."/>
            <person name="Holroyd S."/>
            <person name="Hornsby T."/>
            <person name="Jagels K."/>
            <person name="Lacroix C."/>
            <person name="Maclean J."/>
            <person name="Moule S."/>
            <person name="Murphy L.D."/>
            <person name="Oliver K."/>
            <person name="Quail M.A."/>
            <person name="Rajandream M.A."/>
            <person name="Rutherford K.M."/>
            <person name="Rutter S."/>
            <person name="Seeger K."/>
            <person name="Simon S."/>
            <person name="Simmonds M."/>
            <person name="Skelton J."/>
            <person name="Squares R."/>
            <person name="Squares S."/>
            <person name="Stevens K."/>
            <person name="Taylor K."/>
            <person name="Whitehead S."/>
            <person name="Woodward J.R."/>
            <person name="Barrell B.G."/>
        </authorList>
    </citation>
    <scope>NUCLEOTIDE SEQUENCE [LARGE SCALE GENOMIC DNA]</scope>
    <source>
        <strain>TN</strain>
    </source>
</reference>
<comment type="function">
    <text evidence="1">Catalyzes the transfer of pyrophosphate from adenosine triphosphate (ATP) to 6-hydroxymethyl-7,8-dihydropterin, an enzymatic step in folate biosynthesis pathway.</text>
</comment>
<comment type="catalytic activity">
    <reaction evidence="1">
        <text>6-hydroxymethyl-7,8-dihydropterin + ATP = (7,8-dihydropterin-6-yl)methyl diphosphate + AMP + H(+)</text>
        <dbReference type="Rhea" id="RHEA:11412"/>
        <dbReference type="ChEBI" id="CHEBI:15378"/>
        <dbReference type="ChEBI" id="CHEBI:30616"/>
        <dbReference type="ChEBI" id="CHEBI:44841"/>
        <dbReference type="ChEBI" id="CHEBI:72950"/>
        <dbReference type="ChEBI" id="CHEBI:456215"/>
        <dbReference type="EC" id="2.7.6.3"/>
    </reaction>
</comment>
<comment type="pathway">
    <text evidence="1">Cofactor biosynthesis; tetrahydrofolate biosynthesis; 2-amino-4-hydroxy-6-hydroxymethyl-7,8-dihydropteridine diphosphate from 7,8-dihydroneopterin triphosphate: step 4/4.</text>
</comment>
<comment type="similarity">
    <text evidence="2">Belongs to the HPPK family.</text>
</comment>
<name>HPPK_MYCLE</name>
<proteinExistence type="inferred from homology"/>
<keyword id="KW-0067">ATP-binding</keyword>
<keyword id="KW-0289">Folate biosynthesis</keyword>
<keyword id="KW-0418">Kinase</keyword>
<keyword id="KW-0547">Nucleotide-binding</keyword>
<keyword id="KW-1185">Reference proteome</keyword>
<keyword id="KW-0808">Transferase</keyword>
<protein>
    <recommendedName>
        <fullName evidence="1">2-amino-4-hydroxy-6-hydroxymethyldihydropteridine pyrophosphokinase</fullName>
        <ecNumber evidence="1">2.7.6.3</ecNumber>
    </recommendedName>
    <alternativeName>
        <fullName evidence="1">6-hydroxymethyl-7,8-dihydropterin pyrophosphokinase</fullName>
        <shortName evidence="1">PPPK</shortName>
    </alternativeName>
    <alternativeName>
        <fullName evidence="1">7,8-dihydro-6-hydroxymethylpterin-pyrophosphokinase</fullName>
        <shortName evidence="1">HPPK</shortName>
    </alternativeName>
</protein>
<dbReference type="EC" id="2.7.6.3" evidence="1"/>
<dbReference type="EMBL" id="AL023093">
    <property type="protein sequence ID" value="CAA18792.1"/>
    <property type="molecule type" value="Genomic_DNA"/>
</dbReference>
<dbReference type="EMBL" id="AL583917">
    <property type="protein sequence ID" value="CAC29734.1"/>
    <property type="molecule type" value="Genomic_DNA"/>
</dbReference>
<dbReference type="PIR" id="B86937">
    <property type="entry name" value="B86937"/>
</dbReference>
<dbReference type="RefSeq" id="NP_301286.1">
    <property type="nucleotide sequence ID" value="NC_002677.1"/>
</dbReference>
<dbReference type="RefSeq" id="WP_010907610.1">
    <property type="nucleotide sequence ID" value="NC_002677.1"/>
</dbReference>
<dbReference type="SMR" id="O69528"/>
<dbReference type="STRING" id="272631.gene:17574043"/>
<dbReference type="KEGG" id="mle:ML0226"/>
<dbReference type="PATRIC" id="fig|272631.5.peg.358"/>
<dbReference type="Leproma" id="ML0226"/>
<dbReference type="eggNOG" id="COG0801">
    <property type="taxonomic scope" value="Bacteria"/>
</dbReference>
<dbReference type="HOGENOM" id="CLU_097916_0_0_11"/>
<dbReference type="OrthoDB" id="9808041at2"/>
<dbReference type="UniPathway" id="UPA00077">
    <property type="reaction ID" value="UER00155"/>
</dbReference>
<dbReference type="Proteomes" id="UP000000806">
    <property type="component" value="Chromosome"/>
</dbReference>
<dbReference type="GO" id="GO:0003848">
    <property type="term" value="F:2-amino-4-hydroxy-6-hydroxymethyldihydropteridine diphosphokinase activity"/>
    <property type="evidence" value="ECO:0007669"/>
    <property type="project" value="UniProtKB-EC"/>
</dbReference>
<dbReference type="GO" id="GO:0005524">
    <property type="term" value="F:ATP binding"/>
    <property type="evidence" value="ECO:0007669"/>
    <property type="project" value="UniProtKB-KW"/>
</dbReference>
<dbReference type="GO" id="GO:0016301">
    <property type="term" value="F:kinase activity"/>
    <property type="evidence" value="ECO:0007669"/>
    <property type="project" value="UniProtKB-KW"/>
</dbReference>
<dbReference type="GO" id="GO:0046656">
    <property type="term" value="P:folic acid biosynthetic process"/>
    <property type="evidence" value="ECO:0007669"/>
    <property type="project" value="UniProtKB-KW"/>
</dbReference>
<dbReference type="GO" id="GO:0046654">
    <property type="term" value="P:tetrahydrofolate biosynthetic process"/>
    <property type="evidence" value="ECO:0007669"/>
    <property type="project" value="UniProtKB-UniPathway"/>
</dbReference>
<dbReference type="CDD" id="cd00483">
    <property type="entry name" value="HPPK"/>
    <property type="match status" value="1"/>
</dbReference>
<dbReference type="Gene3D" id="3.30.70.560">
    <property type="entry name" value="7,8-Dihydro-6-hydroxymethylpterin-pyrophosphokinase HPPK"/>
    <property type="match status" value="1"/>
</dbReference>
<dbReference type="InterPro" id="IPR000550">
    <property type="entry name" value="Hppk"/>
</dbReference>
<dbReference type="InterPro" id="IPR035907">
    <property type="entry name" value="Hppk_sf"/>
</dbReference>
<dbReference type="NCBIfam" id="TIGR01498">
    <property type="entry name" value="folK"/>
    <property type="match status" value="1"/>
</dbReference>
<dbReference type="PANTHER" id="PTHR43071">
    <property type="entry name" value="2-AMINO-4-HYDROXY-6-HYDROXYMETHYLDIHYDROPTERIDINE PYROPHOSPHOKINASE"/>
    <property type="match status" value="1"/>
</dbReference>
<dbReference type="PANTHER" id="PTHR43071:SF1">
    <property type="entry name" value="2-AMINO-4-HYDROXY-6-HYDROXYMETHYLDIHYDROPTERIDINE PYROPHOSPHOKINASE"/>
    <property type="match status" value="1"/>
</dbReference>
<dbReference type="Pfam" id="PF01288">
    <property type="entry name" value="HPPK"/>
    <property type="match status" value="1"/>
</dbReference>
<dbReference type="SUPFAM" id="SSF55083">
    <property type="entry name" value="6-hydroxymethyl-7,8-dihydropterin pyrophosphokinase, HPPK"/>
    <property type="match status" value="1"/>
</dbReference>
<dbReference type="PROSITE" id="PS00794">
    <property type="entry name" value="HPPK"/>
    <property type="match status" value="1"/>
</dbReference>
<organism>
    <name type="scientific">Mycobacterium leprae (strain TN)</name>
    <dbReference type="NCBI Taxonomy" id="272631"/>
    <lineage>
        <taxon>Bacteria</taxon>
        <taxon>Bacillati</taxon>
        <taxon>Actinomycetota</taxon>
        <taxon>Actinomycetes</taxon>
        <taxon>Mycobacteriales</taxon>
        <taxon>Mycobacteriaceae</taxon>
        <taxon>Mycobacterium</taxon>
    </lineage>
</organism>
<feature type="chain" id="PRO_0000168254" description="2-amino-4-hydroxy-6-hydroxymethyldihydropteridine pyrophosphokinase">
    <location>
        <begin position="1"/>
        <end position="191"/>
    </location>
</feature>